<reference key="1">
    <citation type="submission" date="2009-01" db="EMBL/GenBank/DDBJ databases">
        <title>Complete sequence of chromosome of Caldicellulosiruptor becscii DSM 6725.</title>
        <authorList>
            <person name="Lucas S."/>
            <person name="Copeland A."/>
            <person name="Lapidus A."/>
            <person name="Glavina del Rio T."/>
            <person name="Tice H."/>
            <person name="Bruce D."/>
            <person name="Goodwin L."/>
            <person name="Pitluck S."/>
            <person name="Sims D."/>
            <person name="Meincke L."/>
            <person name="Brettin T."/>
            <person name="Detter J.C."/>
            <person name="Han C."/>
            <person name="Larimer F."/>
            <person name="Land M."/>
            <person name="Hauser L."/>
            <person name="Kyrpides N."/>
            <person name="Ovchinnikova G."/>
            <person name="Kataeva I."/>
            <person name="Adams M.W.W."/>
        </authorList>
    </citation>
    <scope>NUCLEOTIDE SEQUENCE [LARGE SCALE GENOMIC DNA]</scope>
    <source>
        <strain>ATCC BAA-1888 / DSM 6725 / KCTC 15123 / Z-1320</strain>
    </source>
</reference>
<sequence length="863" mass="99295">MQELTPMMQQYMEIKQKVKDCILFFRLGDFYEMFFEDAIVASKELEIALTSRDCGNNEKAPMCGVPYHSATSYIAKLIEKGYKVAICEQVEDPKLAKGIVKREITRIITPGTFIDDNISTANNFICCISKDRSEFALTFVDVSTGEMYSCLLEEDLQKLVNEIGKYSPSEILISNIEDELYEFLKKNCTSFVQMIEFVDLQKCHEIIENQINVGKIDEKLILSVGNLLKYLTETQKISFDYIRRFEFYRVQNYLQIDINTKRNLELTESIIQRSRKNSLLGILDQTKTSMGSRLLKKWIERPLIDIIEINKRLDSVEELKSNYSTLVQVEELLSRMYDIERLSSKFAYKNVNAKDLLSLKKSIEVLPTLKQFLSSFDSELLKEIYEGLDTLEDIYALIDSSINEDAPVSLKEGGIIKEGFNEEVDRLRNISKNSKELLVEYEEKERNLTGIKNLRIGYNKVFGYYIEVTKSNYSLVPDRYIRKQTLANAERYITEELKKLEDEILGADQKLIELEYQLFCEIRDRIEAQIERIQKTASNIANLDVLCSFARIAIDNEYVRPNVYLGDRIYIKNGRHPVVEKMIGRGNFIPNDTELDQAENRVLIITGPNMAGKSTYMRQVALIVIMAQMGCFVPADEAHIGVVDKIFSRIGASDDISSGQSTFMVEMSEVANILKNATPKSLIIFDEVGRGTSTYDGLSIAWAVLEYVADKSKIGAKTLFATHYHELTELEERIPGVKNYRVDVKEEGKNIIFLRKIVRGGCDSSYGIHVARLAGIPEEVLKRAEEILKQLEEADINRKNIRKLRREIKKEFTEQIDFFSYKKEEIIDKIEKLDILNITPIQALNILSELKHEIIKAKERQLI</sequence>
<feature type="chain" id="PRO_1000192192" description="DNA mismatch repair protein MutS">
    <location>
        <begin position="1"/>
        <end position="863"/>
    </location>
</feature>
<feature type="binding site" evidence="1">
    <location>
        <begin position="607"/>
        <end position="614"/>
    </location>
    <ligand>
        <name>ATP</name>
        <dbReference type="ChEBI" id="CHEBI:30616"/>
    </ligand>
</feature>
<name>MUTS_CALBD</name>
<evidence type="ECO:0000255" key="1">
    <source>
        <dbReference type="HAMAP-Rule" id="MF_00096"/>
    </source>
</evidence>
<organism>
    <name type="scientific">Caldicellulosiruptor bescii (strain ATCC BAA-1888 / DSM 6725 / KCTC 15123 / Z-1320)</name>
    <name type="common">Anaerocellum thermophilum</name>
    <dbReference type="NCBI Taxonomy" id="521460"/>
    <lineage>
        <taxon>Bacteria</taxon>
        <taxon>Bacillati</taxon>
        <taxon>Bacillota</taxon>
        <taxon>Bacillota incertae sedis</taxon>
        <taxon>Caldicellulosiruptorales</taxon>
        <taxon>Caldicellulosiruptoraceae</taxon>
        <taxon>Caldicellulosiruptor</taxon>
    </lineage>
</organism>
<gene>
    <name evidence="1" type="primary">mutS</name>
    <name type="ordered locus">Athe_1500</name>
</gene>
<protein>
    <recommendedName>
        <fullName evidence="1">DNA mismatch repair protein MutS</fullName>
    </recommendedName>
</protein>
<keyword id="KW-0067">ATP-binding</keyword>
<keyword id="KW-0227">DNA damage</keyword>
<keyword id="KW-0234">DNA repair</keyword>
<keyword id="KW-0238">DNA-binding</keyword>
<keyword id="KW-0547">Nucleotide-binding</keyword>
<accession>B9MJU0</accession>
<comment type="function">
    <text evidence="1">This protein is involved in the repair of mismatches in DNA. It is possible that it carries out the mismatch recognition step. This protein has a weak ATPase activity.</text>
</comment>
<comment type="similarity">
    <text evidence="1">Belongs to the DNA mismatch repair MutS family.</text>
</comment>
<proteinExistence type="inferred from homology"/>
<dbReference type="EMBL" id="CP001393">
    <property type="protein sequence ID" value="ACM60598.1"/>
    <property type="molecule type" value="Genomic_DNA"/>
</dbReference>
<dbReference type="RefSeq" id="WP_015907954.1">
    <property type="nucleotide sequence ID" value="NC_012034.1"/>
</dbReference>
<dbReference type="SMR" id="B9MJU0"/>
<dbReference type="STRING" id="521460.Athe_1500"/>
<dbReference type="GeneID" id="31772845"/>
<dbReference type="KEGG" id="ate:Athe_1500"/>
<dbReference type="eggNOG" id="COG0249">
    <property type="taxonomic scope" value="Bacteria"/>
</dbReference>
<dbReference type="HOGENOM" id="CLU_002472_4_0_9"/>
<dbReference type="Proteomes" id="UP000007723">
    <property type="component" value="Chromosome"/>
</dbReference>
<dbReference type="GO" id="GO:0005829">
    <property type="term" value="C:cytosol"/>
    <property type="evidence" value="ECO:0007669"/>
    <property type="project" value="TreeGrafter"/>
</dbReference>
<dbReference type="GO" id="GO:0005524">
    <property type="term" value="F:ATP binding"/>
    <property type="evidence" value="ECO:0007669"/>
    <property type="project" value="UniProtKB-UniRule"/>
</dbReference>
<dbReference type="GO" id="GO:0140664">
    <property type="term" value="F:ATP-dependent DNA damage sensor activity"/>
    <property type="evidence" value="ECO:0007669"/>
    <property type="project" value="InterPro"/>
</dbReference>
<dbReference type="GO" id="GO:0003684">
    <property type="term" value="F:damaged DNA binding"/>
    <property type="evidence" value="ECO:0007669"/>
    <property type="project" value="UniProtKB-UniRule"/>
</dbReference>
<dbReference type="GO" id="GO:0030983">
    <property type="term" value="F:mismatched DNA binding"/>
    <property type="evidence" value="ECO:0007669"/>
    <property type="project" value="InterPro"/>
</dbReference>
<dbReference type="GO" id="GO:0006298">
    <property type="term" value="P:mismatch repair"/>
    <property type="evidence" value="ECO:0007669"/>
    <property type="project" value="UniProtKB-UniRule"/>
</dbReference>
<dbReference type="CDD" id="cd03284">
    <property type="entry name" value="ABC_MutS1"/>
    <property type="match status" value="1"/>
</dbReference>
<dbReference type="FunFam" id="1.10.1420.10:FF:000007">
    <property type="entry name" value="DNA mismatch repair protein MutS"/>
    <property type="match status" value="1"/>
</dbReference>
<dbReference type="FunFam" id="3.40.1170.10:FF:000001">
    <property type="entry name" value="DNA mismatch repair protein MutS"/>
    <property type="match status" value="1"/>
</dbReference>
<dbReference type="FunFam" id="3.40.50.300:FF:001579">
    <property type="entry name" value="DNA mismatch repair protein MutS"/>
    <property type="match status" value="1"/>
</dbReference>
<dbReference type="Gene3D" id="1.10.1420.10">
    <property type="match status" value="2"/>
</dbReference>
<dbReference type="Gene3D" id="3.40.1170.10">
    <property type="entry name" value="DNA repair protein MutS, domain I"/>
    <property type="match status" value="1"/>
</dbReference>
<dbReference type="Gene3D" id="3.30.420.110">
    <property type="entry name" value="MutS, connector domain"/>
    <property type="match status" value="1"/>
</dbReference>
<dbReference type="Gene3D" id="3.40.50.300">
    <property type="entry name" value="P-loop containing nucleotide triphosphate hydrolases"/>
    <property type="match status" value="1"/>
</dbReference>
<dbReference type="HAMAP" id="MF_00096">
    <property type="entry name" value="MutS"/>
    <property type="match status" value="1"/>
</dbReference>
<dbReference type="InterPro" id="IPR005748">
    <property type="entry name" value="DNA_mismatch_repair_MutS"/>
</dbReference>
<dbReference type="InterPro" id="IPR007695">
    <property type="entry name" value="DNA_mismatch_repair_MutS-lik_N"/>
</dbReference>
<dbReference type="InterPro" id="IPR017261">
    <property type="entry name" value="DNA_mismatch_repair_MutS/MSH"/>
</dbReference>
<dbReference type="InterPro" id="IPR000432">
    <property type="entry name" value="DNA_mismatch_repair_MutS_C"/>
</dbReference>
<dbReference type="InterPro" id="IPR007861">
    <property type="entry name" value="DNA_mismatch_repair_MutS_clamp"/>
</dbReference>
<dbReference type="InterPro" id="IPR007696">
    <property type="entry name" value="DNA_mismatch_repair_MutS_core"/>
</dbReference>
<dbReference type="InterPro" id="IPR016151">
    <property type="entry name" value="DNA_mismatch_repair_MutS_N"/>
</dbReference>
<dbReference type="InterPro" id="IPR036187">
    <property type="entry name" value="DNA_mismatch_repair_MutS_sf"/>
</dbReference>
<dbReference type="InterPro" id="IPR007860">
    <property type="entry name" value="DNA_mmatch_repair_MutS_con_dom"/>
</dbReference>
<dbReference type="InterPro" id="IPR045076">
    <property type="entry name" value="MutS"/>
</dbReference>
<dbReference type="InterPro" id="IPR036678">
    <property type="entry name" value="MutS_con_dom_sf"/>
</dbReference>
<dbReference type="InterPro" id="IPR027417">
    <property type="entry name" value="P-loop_NTPase"/>
</dbReference>
<dbReference type="NCBIfam" id="TIGR01070">
    <property type="entry name" value="mutS1"/>
    <property type="match status" value="1"/>
</dbReference>
<dbReference type="NCBIfam" id="NF003810">
    <property type="entry name" value="PRK05399.1"/>
    <property type="match status" value="1"/>
</dbReference>
<dbReference type="PANTHER" id="PTHR11361:SF34">
    <property type="entry name" value="DNA MISMATCH REPAIR PROTEIN MSH1, MITOCHONDRIAL"/>
    <property type="match status" value="1"/>
</dbReference>
<dbReference type="PANTHER" id="PTHR11361">
    <property type="entry name" value="DNA MISMATCH REPAIR PROTEIN MUTS FAMILY MEMBER"/>
    <property type="match status" value="1"/>
</dbReference>
<dbReference type="Pfam" id="PF01624">
    <property type="entry name" value="MutS_I"/>
    <property type="match status" value="1"/>
</dbReference>
<dbReference type="Pfam" id="PF05188">
    <property type="entry name" value="MutS_II"/>
    <property type="match status" value="1"/>
</dbReference>
<dbReference type="Pfam" id="PF05192">
    <property type="entry name" value="MutS_III"/>
    <property type="match status" value="1"/>
</dbReference>
<dbReference type="Pfam" id="PF05190">
    <property type="entry name" value="MutS_IV"/>
    <property type="match status" value="1"/>
</dbReference>
<dbReference type="Pfam" id="PF00488">
    <property type="entry name" value="MutS_V"/>
    <property type="match status" value="1"/>
</dbReference>
<dbReference type="PIRSF" id="PIRSF037677">
    <property type="entry name" value="DNA_mis_repair_Msh6"/>
    <property type="match status" value="1"/>
</dbReference>
<dbReference type="SMART" id="SM00534">
    <property type="entry name" value="MUTSac"/>
    <property type="match status" value="1"/>
</dbReference>
<dbReference type="SMART" id="SM00533">
    <property type="entry name" value="MUTSd"/>
    <property type="match status" value="1"/>
</dbReference>
<dbReference type="SUPFAM" id="SSF55271">
    <property type="entry name" value="DNA repair protein MutS, domain I"/>
    <property type="match status" value="1"/>
</dbReference>
<dbReference type="SUPFAM" id="SSF53150">
    <property type="entry name" value="DNA repair protein MutS, domain II"/>
    <property type="match status" value="1"/>
</dbReference>
<dbReference type="SUPFAM" id="SSF48334">
    <property type="entry name" value="DNA repair protein MutS, domain III"/>
    <property type="match status" value="1"/>
</dbReference>
<dbReference type="SUPFAM" id="SSF52540">
    <property type="entry name" value="P-loop containing nucleoside triphosphate hydrolases"/>
    <property type="match status" value="1"/>
</dbReference>
<dbReference type="PROSITE" id="PS00486">
    <property type="entry name" value="DNA_MISMATCH_REPAIR_2"/>
    <property type="match status" value="1"/>
</dbReference>